<name>Y4OM_SINFN</name>
<dbReference type="EMBL" id="U00090">
    <property type="protein sequence ID" value="AAB91800.1"/>
    <property type="molecule type" value="Genomic_DNA"/>
</dbReference>
<dbReference type="RefSeq" id="NP_444003.1">
    <property type="nucleotide sequence ID" value="NC_000914.2"/>
</dbReference>
<dbReference type="RefSeq" id="WP_010875249.1">
    <property type="nucleotide sequence ID" value="NC_000914.2"/>
</dbReference>
<dbReference type="SMR" id="P55598"/>
<dbReference type="KEGG" id="rhi:NGR_a02220"/>
<dbReference type="PATRIC" id="fig|394.7.peg.233"/>
<dbReference type="eggNOG" id="COG3415">
    <property type="taxonomic scope" value="Bacteria"/>
</dbReference>
<dbReference type="HOGENOM" id="CLU_119065_0_0_5"/>
<dbReference type="OrthoDB" id="8683412at2"/>
<dbReference type="Proteomes" id="UP000001054">
    <property type="component" value="Plasmid pNGR234a"/>
</dbReference>
<dbReference type="InterPro" id="IPR009057">
    <property type="entry name" value="Homeodomain-like_sf"/>
</dbReference>
<dbReference type="InterPro" id="IPR055247">
    <property type="entry name" value="InsJ-like_HTH"/>
</dbReference>
<dbReference type="Pfam" id="PF13518">
    <property type="entry name" value="HTH_28"/>
    <property type="match status" value="1"/>
</dbReference>
<dbReference type="SUPFAM" id="SSF46689">
    <property type="entry name" value="Homeodomain-like"/>
    <property type="match status" value="1"/>
</dbReference>
<evidence type="ECO:0000256" key="1">
    <source>
        <dbReference type="SAM" id="MobiDB-lite"/>
    </source>
</evidence>
<feature type="chain" id="PRO_0000200928" description="Uncharacterized protein y4oM">
    <location>
        <begin position="1"/>
        <end position="149"/>
    </location>
</feature>
<feature type="region of interest" description="Disordered" evidence="1">
    <location>
        <begin position="1"/>
        <end position="20"/>
    </location>
</feature>
<feature type="compositionally biased region" description="Basic and acidic residues" evidence="1">
    <location>
        <begin position="1"/>
        <end position="11"/>
    </location>
</feature>
<protein>
    <recommendedName>
        <fullName>Uncharacterized protein y4oM</fullName>
    </recommendedName>
</protein>
<gene>
    <name type="ordered locus">NGR_a02220</name>
    <name type="ORF">y4oM</name>
</gene>
<sequence>MTKESKPDRLRQMGALNPKPESVRAPWFREAGFFDPLDLVQVKYEMLRHAREDGTNKADAAALFGLSRQTYYQAEAAFERDGMSGLLPRTRGPKSAHKLTGEVMRLVEEHLDANGQLQARSLADLVHSRLGISVHPRSIERAVARKKKR</sequence>
<reference key="1">
    <citation type="journal article" date="1997" name="Nature">
        <title>Molecular basis of symbiosis between Rhizobium and legumes.</title>
        <authorList>
            <person name="Freiberg C.A."/>
            <person name="Fellay R."/>
            <person name="Bairoch A."/>
            <person name="Broughton W.J."/>
            <person name="Rosenthal A."/>
            <person name="Perret X."/>
        </authorList>
    </citation>
    <scope>NUCLEOTIDE SEQUENCE [LARGE SCALE GENOMIC DNA]</scope>
    <source>
        <strain>NBRC 101917 / NGR234</strain>
    </source>
</reference>
<reference key="2">
    <citation type="journal article" date="2009" name="Appl. Environ. Microbiol.">
        <title>Rhizobium sp. strain NGR234 possesses a remarkable number of secretion systems.</title>
        <authorList>
            <person name="Schmeisser C."/>
            <person name="Liesegang H."/>
            <person name="Krysciak D."/>
            <person name="Bakkou N."/>
            <person name="Le Quere A."/>
            <person name="Wollherr A."/>
            <person name="Heinemeyer I."/>
            <person name="Morgenstern B."/>
            <person name="Pommerening-Roeser A."/>
            <person name="Flores M."/>
            <person name="Palacios R."/>
            <person name="Brenner S."/>
            <person name="Gottschalk G."/>
            <person name="Schmitz R.A."/>
            <person name="Broughton W.J."/>
            <person name="Perret X."/>
            <person name="Strittmatter A.W."/>
            <person name="Streit W.R."/>
        </authorList>
    </citation>
    <scope>NUCLEOTIDE SEQUENCE [LARGE SCALE GENOMIC DNA]</scope>
    <source>
        <strain>NBRC 101917 / NGR234</strain>
    </source>
</reference>
<keyword id="KW-0614">Plasmid</keyword>
<keyword id="KW-1185">Reference proteome</keyword>
<organism>
    <name type="scientific">Sinorhizobium fredii (strain NBRC 101917 / NGR234)</name>
    <dbReference type="NCBI Taxonomy" id="394"/>
    <lineage>
        <taxon>Bacteria</taxon>
        <taxon>Pseudomonadati</taxon>
        <taxon>Pseudomonadota</taxon>
        <taxon>Alphaproteobacteria</taxon>
        <taxon>Hyphomicrobiales</taxon>
        <taxon>Rhizobiaceae</taxon>
        <taxon>Sinorhizobium/Ensifer group</taxon>
        <taxon>Sinorhizobium</taxon>
    </lineage>
</organism>
<accession>P55598</accession>
<geneLocation type="plasmid">
    <name>sym pNGR234a</name>
</geneLocation>
<proteinExistence type="predicted"/>